<comment type="function">
    <text evidence="1">Binds 16S rRNA, required for the assembly of 30S particles and may also be responsible for determining the conformation of the 16S rRNA at the A site.</text>
</comment>
<comment type="subunit">
    <text evidence="1">Part of the 30S ribosomal subunit. Contacts proteins S3 and S10.</text>
</comment>
<comment type="similarity">
    <text evidence="1">Belongs to the universal ribosomal protein uS14 family.</text>
</comment>
<gene>
    <name evidence="1" type="primary">rpsN</name>
    <name type="ordered locus">SPCG_0231</name>
</gene>
<evidence type="ECO:0000255" key="1">
    <source>
        <dbReference type="HAMAP-Rule" id="MF_00537"/>
    </source>
</evidence>
<evidence type="ECO:0000305" key="2"/>
<protein>
    <recommendedName>
        <fullName evidence="1">Small ribosomal subunit protein uS14</fullName>
    </recommendedName>
    <alternativeName>
        <fullName evidence="2">30S ribosomal protein S14</fullName>
    </alternativeName>
</protein>
<reference key="1">
    <citation type="journal article" date="2009" name="BMC Genomics">
        <title>Genome evolution driven by host adaptations results in a more virulent and antimicrobial-resistant Streptococcus pneumoniae serotype 14.</title>
        <authorList>
            <person name="Ding F."/>
            <person name="Tang P."/>
            <person name="Hsu M.-H."/>
            <person name="Cui P."/>
            <person name="Hu S."/>
            <person name="Yu J."/>
            <person name="Chiu C.-H."/>
        </authorList>
    </citation>
    <scope>NUCLEOTIDE SEQUENCE [LARGE SCALE GENOMIC DNA]</scope>
    <source>
        <strain>CGSP14</strain>
    </source>
</reference>
<sequence>MAKKSMVAREAKRQKIVDRYAEKRAALKAAGDYEGLSKLPRNASPTRLHNRCRVTGRPHSVYRKFGLSRIAFRELAHKGQIPGVTKASW</sequence>
<organism>
    <name type="scientific">Streptococcus pneumoniae (strain CGSP14)</name>
    <dbReference type="NCBI Taxonomy" id="516950"/>
    <lineage>
        <taxon>Bacteria</taxon>
        <taxon>Bacillati</taxon>
        <taxon>Bacillota</taxon>
        <taxon>Bacilli</taxon>
        <taxon>Lactobacillales</taxon>
        <taxon>Streptococcaceae</taxon>
        <taxon>Streptococcus</taxon>
    </lineage>
</organism>
<dbReference type="EMBL" id="CP001033">
    <property type="protein sequence ID" value="ACB89483.1"/>
    <property type="molecule type" value="Genomic_DNA"/>
</dbReference>
<dbReference type="RefSeq" id="WP_001085703.1">
    <property type="nucleotide sequence ID" value="NC_010582.1"/>
</dbReference>
<dbReference type="SMR" id="B2IS53"/>
<dbReference type="GeneID" id="45652296"/>
<dbReference type="KEGG" id="spw:SPCG_0231"/>
<dbReference type="HOGENOM" id="CLU_139869_0_0_9"/>
<dbReference type="GO" id="GO:0005737">
    <property type="term" value="C:cytoplasm"/>
    <property type="evidence" value="ECO:0007669"/>
    <property type="project" value="UniProtKB-ARBA"/>
</dbReference>
<dbReference type="GO" id="GO:0015935">
    <property type="term" value="C:small ribosomal subunit"/>
    <property type="evidence" value="ECO:0007669"/>
    <property type="project" value="TreeGrafter"/>
</dbReference>
<dbReference type="GO" id="GO:0019843">
    <property type="term" value="F:rRNA binding"/>
    <property type="evidence" value="ECO:0007669"/>
    <property type="project" value="UniProtKB-UniRule"/>
</dbReference>
<dbReference type="GO" id="GO:0003735">
    <property type="term" value="F:structural constituent of ribosome"/>
    <property type="evidence" value="ECO:0007669"/>
    <property type="project" value="InterPro"/>
</dbReference>
<dbReference type="GO" id="GO:0006412">
    <property type="term" value="P:translation"/>
    <property type="evidence" value="ECO:0007669"/>
    <property type="project" value="UniProtKB-UniRule"/>
</dbReference>
<dbReference type="FunFam" id="4.10.830.10:FF:000003">
    <property type="entry name" value="30S ribosomal protein S14"/>
    <property type="match status" value="1"/>
</dbReference>
<dbReference type="Gene3D" id="4.10.830.10">
    <property type="entry name" value="30s Ribosomal Protein S14, Chain N"/>
    <property type="match status" value="1"/>
</dbReference>
<dbReference type="HAMAP" id="MF_00537">
    <property type="entry name" value="Ribosomal_uS14_1"/>
    <property type="match status" value="1"/>
</dbReference>
<dbReference type="InterPro" id="IPR001209">
    <property type="entry name" value="Ribosomal_uS14"/>
</dbReference>
<dbReference type="InterPro" id="IPR023036">
    <property type="entry name" value="Ribosomal_uS14_bac/plastid"/>
</dbReference>
<dbReference type="InterPro" id="IPR018271">
    <property type="entry name" value="Ribosomal_uS14_CS"/>
</dbReference>
<dbReference type="InterPro" id="IPR043140">
    <property type="entry name" value="Ribosomal_uS14_sf"/>
</dbReference>
<dbReference type="NCBIfam" id="NF006477">
    <property type="entry name" value="PRK08881.1"/>
    <property type="match status" value="1"/>
</dbReference>
<dbReference type="PANTHER" id="PTHR19836">
    <property type="entry name" value="30S RIBOSOMAL PROTEIN S14"/>
    <property type="match status" value="1"/>
</dbReference>
<dbReference type="PANTHER" id="PTHR19836:SF19">
    <property type="entry name" value="SMALL RIBOSOMAL SUBUNIT PROTEIN US14M"/>
    <property type="match status" value="1"/>
</dbReference>
<dbReference type="Pfam" id="PF00253">
    <property type="entry name" value="Ribosomal_S14"/>
    <property type="match status" value="1"/>
</dbReference>
<dbReference type="SUPFAM" id="SSF57716">
    <property type="entry name" value="Glucocorticoid receptor-like (DNA-binding domain)"/>
    <property type="match status" value="1"/>
</dbReference>
<dbReference type="PROSITE" id="PS00527">
    <property type="entry name" value="RIBOSOMAL_S14"/>
    <property type="match status" value="1"/>
</dbReference>
<keyword id="KW-0687">Ribonucleoprotein</keyword>
<keyword id="KW-0689">Ribosomal protein</keyword>
<keyword id="KW-0694">RNA-binding</keyword>
<keyword id="KW-0699">rRNA-binding</keyword>
<feature type="chain" id="PRO_1000128610" description="Small ribosomal subunit protein uS14">
    <location>
        <begin position="1"/>
        <end position="89"/>
    </location>
</feature>
<name>RS14_STRPS</name>
<proteinExistence type="inferred from homology"/>
<accession>B2IS53</accession>